<feature type="chain" id="PRO_0000383749" description="Structure-specific endonuclease subunit SLX1 homolog">
    <location>
        <begin position="1"/>
        <end position="333"/>
    </location>
</feature>
<feature type="domain" description="GIY-YIG" evidence="1">
    <location>
        <begin position="68"/>
        <end position="157"/>
    </location>
</feature>
<feature type="zinc finger region" description="SLX1-type" evidence="1">
    <location>
        <begin position="237"/>
        <end position="293"/>
    </location>
</feature>
<reference key="1">
    <citation type="journal article" date="2007" name="Science">
        <title>Draft genome of the filarial nematode parasite Brugia malayi.</title>
        <authorList>
            <person name="Ghedin E."/>
            <person name="Wang S."/>
            <person name="Spiro D."/>
            <person name="Caler E."/>
            <person name="Zhao Q."/>
            <person name="Crabtree J."/>
            <person name="Allen J.E."/>
            <person name="Delcher A.L."/>
            <person name="Guiliano D.B."/>
            <person name="Miranda-Saavedra D."/>
            <person name="Angiuoli S.V."/>
            <person name="Creasy T."/>
            <person name="Amedeo P."/>
            <person name="Haas B."/>
            <person name="El-Sayed N.M."/>
            <person name="Wortman J.R."/>
            <person name="Feldblyum T."/>
            <person name="Tallon L."/>
            <person name="Schatz M."/>
            <person name="Shumway M."/>
            <person name="Koo H."/>
            <person name="Salzberg S.L."/>
            <person name="Schobel S."/>
            <person name="Pertea M."/>
            <person name="Pop M."/>
            <person name="White O."/>
            <person name="Barton G.J."/>
            <person name="Carlow C.K.S."/>
            <person name="Crawford M.J."/>
            <person name="Daub J."/>
            <person name="Dimmic M.W."/>
            <person name="Estes C.F."/>
            <person name="Foster J.M."/>
            <person name="Ganatra M."/>
            <person name="Gregory W.F."/>
            <person name="Johnson N.M."/>
            <person name="Jin J."/>
            <person name="Komuniecki R."/>
            <person name="Korf I."/>
            <person name="Kumar S."/>
            <person name="Laney S."/>
            <person name="Li B.-W."/>
            <person name="Li W."/>
            <person name="Lindblom T.H."/>
            <person name="Lustigman S."/>
            <person name="Ma D."/>
            <person name="Maina C.V."/>
            <person name="Martin D.M."/>
            <person name="McCarter J.P."/>
            <person name="McReynolds L."/>
            <person name="Mitreva M."/>
            <person name="Nutman T.B."/>
            <person name="Parkinson J."/>
            <person name="Peregrin-Alvarez J.M."/>
            <person name="Poole C."/>
            <person name="Ren Q."/>
            <person name="Saunders L."/>
            <person name="Sluder A.E."/>
            <person name="Smith K."/>
            <person name="Stanke M."/>
            <person name="Unnasch T.R."/>
            <person name="Ware J."/>
            <person name="Wei A.D."/>
            <person name="Weil G."/>
            <person name="Williams D.J."/>
            <person name="Zhang Y."/>
            <person name="Williams S.A."/>
            <person name="Fraser-Liggett C."/>
            <person name="Slatko B."/>
            <person name="Blaxter M.L."/>
            <person name="Scott A.L."/>
        </authorList>
    </citation>
    <scope>NUCLEOTIDE SEQUENCE [LARGE SCALE GENOMIC DNA]</scope>
</reference>
<organism>
    <name type="scientific">Brugia malayi</name>
    <name type="common">Filarial nematode worm</name>
    <dbReference type="NCBI Taxonomy" id="6279"/>
    <lineage>
        <taxon>Eukaryota</taxon>
        <taxon>Metazoa</taxon>
        <taxon>Ecdysozoa</taxon>
        <taxon>Nematoda</taxon>
        <taxon>Chromadorea</taxon>
        <taxon>Rhabditida</taxon>
        <taxon>Spirurina</taxon>
        <taxon>Spiruromorpha</taxon>
        <taxon>Filarioidea</taxon>
        <taxon>Onchocercidae</taxon>
        <taxon>Brugia</taxon>
    </lineage>
</organism>
<gene>
    <name type="ORF">Bm1_35165</name>
</gene>
<sequence>MSADESNIICIEDDEENIEESGVKYSDKLPVCQGSSKILCRSSSQEVIQENERKKRGKNYAVPSILDDFFGVYCLLSRSPNRYFKNRCYIGYTVNPNRRIRQHNAGKEFGGAKKTDHRGPWDMVCIIHGFPNSVSALRFEWAWQNPEKSRRLRLLNLKKRTSETAFGFRLRIACHMLNSDPWRRLSLTFRWLLPELEIPFPLDVLPPSHIAVEHGAVTKISTLIPQLQEEYDVAGTCSLCLKPILSISELLRCHANETCKSHFHMRCLSKHALNAVDEYRTSLFPIQGQCPKCGVVYLWGDLIRDQRILLAVNKFNSSSTLFNMIPRGKLIKM</sequence>
<accession>A8PV03</accession>
<keyword id="KW-0227">DNA damage</keyword>
<keyword id="KW-0233">DNA recombination</keyword>
<keyword id="KW-0234">DNA repair</keyword>
<keyword id="KW-0255">Endonuclease</keyword>
<keyword id="KW-0378">Hydrolase</keyword>
<keyword id="KW-0479">Metal-binding</keyword>
<keyword id="KW-0540">Nuclease</keyword>
<keyword id="KW-0539">Nucleus</keyword>
<keyword id="KW-1185">Reference proteome</keyword>
<keyword id="KW-0862">Zinc</keyword>
<keyword id="KW-0863">Zinc-finger</keyword>
<protein>
    <recommendedName>
        <fullName evidence="1">Structure-specific endonuclease subunit SLX1 homolog</fullName>
        <ecNumber evidence="1">3.1.-.-</ecNumber>
    </recommendedName>
</protein>
<name>SLX1_BRUMA</name>
<evidence type="ECO:0000255" key="1">
    <source>
        <dbReference type="HAMAP-Rule" id="MF_03100"/>
    </source>
</evidence>
<dbReference type="EC" id="3.1.-.-" evidence="1"/>
<dbReference type="EMBL" id="DS239406">
    <property type="protein sequence ID" value="EDP32696.1"/>
    <property type="molecule type" value="Genomic_DNA"/>
</dbReference>
<dbReference type="SMR" id="A8PV03"/>
<dbReference type="FunCoup" id="A8PV03">
    <property type="interactions" value="937"/>
</dbReference>
<dbReference type="STRING" id="6279.A8PV03"/>
<dbReference type="EnsemblMetazoa" id="Bm4448a.1">
    <property type="protein sequence ID" value="Bm4448a.1"/>
    <property type="gene ID" value="WBGene00224709"/>
</dbReference>
<dbReference type="GeneID" id="6101922"/>
<dbReference type="KEGG" id="bmy:BM_BM4448"/>
<dbReference type="CTD" id="6101922"/>
<dbReference type="WormBase" id="Bm4448a">
    <property type="protein sequence ID" value="BM01626"/>
    <property type="gene ID" value="WBGene00224709"/>
    <property type="gene designation" value="Bma-slx-1"/>
</dbReference>
<dbReference type="HOGENOM" id="CLU_030739_0_0_1"/>
<dbReference type="InParanoid" id="A8PV03"/>
<dbReference type="OMA" id="MVCIIHG"/>
<dbReference type="OrthoDB" id="24645at2759"/>
<dbReference type="Proteomes" id="UP000006672">
    <property type="component" value="Unassembled WGS sequence"/>
</dbReference>
<dbReference type="GO" id="GO:0033557">
    <property type="term" value="C:Slx1-Slx4 complex"/>
    <property type="evidence" value="ECO:0007669"/>
    <property type="project" value="UniProtKB-UniRule"/>
</dbReference>
<dbReference type="GO" id="GO:0048257">
    <property type="term" value="F:3'-flap endonuclease activity"/>
    <property type="evidence" value="ECO:0007669"/>
    <property type="project" value="EnsemblMetazoa"/>
</dbReference>
<dbReference type="GO" id="GO:0017108">
    <property type="term" value="F:5'-flap endonuclease activity"/>
    <property type="evidence" value="ECO:0007669"/>
    <property type="project" value="EnsemblMetazoa"/>
</dbReference>
<dbReference type="GO" id="GO:0008821">
    <property type="term" value="F:crossover junction DNA endonuclease activity"/>
    <property type="evidence" value="ECO:0007669"/>
    <property type="project" value="EnsemblMetazoa"/>
</dbReference>
<dbReference type="GO" id="GO:0019899">
    <property type="term" value="F:enzyme binding"/>
    <property type="evidence" value="ECO:0007669"/>
    <property type="project" value="EnsemblMetazoa"/>
</dbReference>
<dbReference type="GO" id="GO:0008270">
    <property type="term" value="F:zinc ion binding"/>
    <property type="evidence" value="ECO:0007669"/>
    <property type="project" value="UniProtKB-KW"/>
</dbReference>
<dbReference type="GO" id="GO:0000724">
    <property type="term" value="P:double-strand break repair via homologous recombination"/>
    <property type="evidence" value="ECO:0007669"/>
    <property type="project" value="EnsemblMetazoa"/>
</dbReference>
<dbReference type="GO" id="GO:0009792">
    <property type="term" value="P:embryo development ending in birth or egg hatching"/>
    <property type="evidence" value="ECO:0007669"/>
    <property type="project" value="EnsemblMetazoa"/>
</dbReference>
<dbReference type="GO" id="GO:0036297">
    <property type="term" value="P:interstrand cross-link repair"/>
    <property type="evidence" value="ECO:0007669"/>
    <property type="project" value="EnsemblMetazoa"/>
</dbReference>
<dbReference type="GO" id="GO:0002164">
    <property type="term" value="P:larval development"/>
    <property type="evidence" value="ECO:0007669"/>
    <property type="project" value="EnsemblMetazoa"/>
</dbReference>
<dbReference type="GO" id="GO:0051307">
    <property type="term" value="P:meiotic chromosome separation"/>
    <property type="evidence" value="ECO:0007669"/>
    <property type="project" value="EnsemblMetazoa"/>
</dbReference>
<dbReference type="GO" id="GO:0000706">
    <property type="term" value="P:meiotic DNA double-strand break processing"/>
    <property type="evidence" value="ECO:0007669"/>
    <property type="project" value="EnsemblMetazoa"/>
</dbReference>
<dbReference type="GO" id="GO:0061064">
    <property type="term" value="P:negative regulation of nematode larval development"/>
    <property type="evidence" value="ECO:0007669"/>
    <property type="project" value="EnsemblMetazoa"/>
</dbReference>
<dbReference type="GO" id="GO:0040019">
    <property type="term" value="P:positive regulation of embryonic development"/>
    <property type="evidence" value="ECO:0007669"/>
    <property type="project" value="EnsemblMetazoa"/>
</dbReference>
<dbReference type="GO" id="GO:0000712">
    <property type="term" value="P:resolution of meiotic recombination intermediates"/>
    <property type="evidence" value="ECO:0007669"/>
    <property type="project" value="EnsemblMetazoa"/>
</dbReference>
<dbReference type="CDD" id="cd10455">
    <property type="entry name" value="GIY-YIG_SLX1"/>
    <property type="match status" value="1"/>
</dbReference>
<dbReference type="CDD" id="cd15489">
    <property type="entry name" value="PHD_SF"/>
    <property type="match status" value="1"/>
</dbReference>
<dbReference type="FunFam" id="3.40.1440.10:FF:000008">
    <property type="entry name" value="Structure-specific endonuclease subunit SLX1 homolog"/>
    <property type="match status" value="1"/>
</dbReference>
<dbReference type="Gene3D" id="3.40.1440.10">
    <property type="entry name" value="GIY-YIG endonuclease"/>
    <property type="match status" value="1"/>
</dbReference>
<dbReference type="Gene3D" id="3.30.40.10">
    <property type="entry name" value="Zinc/RING finger domain, C3HC4 (zinc finger)"/>
    <property type="match status" value="1"/>
</dbReference>
<dbReference type="HAMAP" id="MF_03100">
    <property type="entry name" value="Endonuc_su_Slx1"/>
    <property type="match status" value="1"/>
</dbReference>
<dbReference type="InterPro" id="IPR000305">
    <property type="entry name" value="GIY-YIG_endonuc"/>
</dbReference>
<dbReference type="InterPro" id="IPR035901">
    <property type="entry name" value="GIY-YIG_endonuc_sf"/>
</dbReference>
<dbReference type="InterPro" id="IPR027520">
    <property type="entry name" value="Slx1"/>
</dbReference>
<dbReference type="InterPro" id="IPR048749">
    <property type="entry name" value="SLX1_C"/>
</dbReference>
<dbReference type="InterPro" id="IPR050381">
    <property type="entry name" value="SLX1_endonuclease"/>
</dbReference>
<dbReference type="InterPro" id="IPR013083">
    <property type="entry name" value="Znf_RING/FYVE/PHD"/>
</dbReference>
<dbReference type="PANTHER" id="PTHR20208">
    <property type="entry name" value="STRUCTURE-SPECIFIC ENDONUCLEASE SUBUNIT SLX1"/>
    <property type="match status" value="1"/>
</dbReference>
<dbReference type="PANTHER" id="PTHR20208:SF10">
    <property type="entry name" value="STRUCTURE-SPECIFIC ENDONUCLEASE SUBUNIT SLX1"/>
    <property type="match status" value="1"/>
</dbReference>
<dbReference type="Pfam" id="PF01541">
    <property type="entry name" value="GIY-YIG"/>
    <property type="match status" value="1"/>
</dbReference>
<dbReference type="Pfam" id="PF21202">
    <property type="entry name" value="SLX1_C"/>
    <property type="match status" value="1"/>
</dbReference>
<dbReference type="PROSITE" id="PS50164">
    <property type="entry name" value="GIY_YIG"/>
    <property type="match status" value="1"/>
</dbReference>
<proteinExistence type="inferred from homology"/>
<comment type="function">
    <text evidence="1">Catalytic subunit of a heterodimeric structure-specific endonuclease that resolves DNA secondary structures generated during DNA repair and recombination. Has endonuclease activity towards branched DNA substrates, introducing single-strand cuts in duplex DNA close to junctions with ss-DNA.</text>
</comment>
<comment type="cofactor">
    <cofactor evidence="1">
        <name>a divalent metal cation</name>
        <dbReference type="ChEBI" id="CHEBI:60240"/>
    </cofactor>
</comment>
<comment type="subunit">
    <text evidence="1">Forms a heterodimer with a member of the SLX4 family.</text>
</comment>
<comment type="subcellular location">
    <subcellularLocation>
        <location evidence="1">Nucleus</location>
    </subcellularLocation>
</comment>
<comment type="similarity">
    <text evidence="1">Belongs to the SLX1 family.</text>
</comment>